<accession>Q2A1A6</accession>
<reference key="1">
    <citation type="submission" date="2006-03" db="EMBL/GenBank/DDBJ databases">
        <title>Complete genome sequence of Francisella tularensis LVS (Live Vaccine Strain).</title>
        <authorList>
            <person name="Chain P."/>
            <person name="Larimer F."/>
            <person name="Land M."/>
            <person name="Stilwagen S."/>
            <person name="Larsson P."/>
            <person name="Bearden S."/>
            <person name="Chu M."/>
            <person name="Oyston P."/>
            <person name="Forsman M."/>
            <person name="Andersson S."/>
            <person name="Lindler L."/>
            <person name="Titball R."/>
            <person name="Garcia E."/>
        </authorList>
    </citation>
    <scope>NUCLEOTIDE SEQUENCE [LARGE SCALE GENOMIC DNA]</scope>
    <source>
        <strain>LVS</strain>
    </source>
</reference>
<evidence type="ECO:0000255" key="1">
    <source>
        <dbReference type="HAMAP-Rule" id="MF_00275"/>
    </source>
</evidence>
<proteinExistence type="inferred from homology"/>
<dbReference type="EMBL" id="AM233362">
    <property type="protein sequence ID" value="CAJ80322.1"/>
    <property type="molecule type" value="Genomic_DNA"/>
</dbReference>
<dbReference type="RefSeq" id="WP_003017453.1">
    <property type="nucleotide sequence ID" value="NZ_CP009694.1"/>
</dbReference>
<dbReference type="SMR" id="Q2A1A6"/>
<dbReference type="KEGG" id="ftl:FTL_1883"/>
<dbReference type="Proteomes" id="UP000001944">
    <property type="component" value="Chromosome"/>
</dbReference>
<dbReference type="GO" id="GO:0005886">
    <property type="term" value="C:plasma membrane"/>
    <property type="evidence" value="ECO:0007669"/>
    <property type="project" value="UniProtKB-SubCell"/>
</dbReference>
<dbReference type="GO" id="GO:0008556">
    <property type="term" value="F:P-type potassium transmembrane transporter activity"/>
    <property type="evidence" value="ECO:0007669"/>
    <property type="project" value="InterPro"/>
</dbReference>
<dbReference type="GO" id="GO:0030955">
    <property type="term" value="F:potassium ion binding"/>
    <property type="evidence" value="ECO:0007669"/>
    <property type="project" value="UniProtKB-UniRule"/>
</dbReference>
<dbReference type="HAMAP" id="MF_00275">
    <property type="entry name" value="KdpA"/>
    <property type="match status" value="1"/>
</dbReference>
<dbReference type="InterPro" id="IPR004623">
    <property type="entry name" value="KdpA"/>
</dbReference>
<dbReference type="NCBIfam" id="TIGR00680">
    <property type="entry name" value="kdpA"/>
    <property type="match status" value="1"/>
</dbReference>
<dbReference type="PANTHER" id="PTHR30607">
    <property type="entry name" value="POTASSIUM-TRANSPORTING ATPASE A CHAIN"/>
    <property type="match status" value="1"/>
</dbReference>
<dbReference type="PANTHER" id="PTHR30607:SF2">
    <property type="entry name" value="POTASSIUM-TRANSPORTING ATPASE POTASSIUM-BINDING SUBUNIT"/>
    <property type="match status" value="1"/>
</dbReference>
<dbReference type="Pfam" id="PF03814">
    <property type="entry name" value="KdpA"/>
    <property type="match status" value="1"/>
</dbReference>
<dbReference type="PIRSF" id="PIRSF001294">
    <property type="entry name" value="K_ATPaseA"/>
    <property type="match status" value="1"/>
</dbReference>
<keyword id="KW-0997">Cell inner membrane</keyword>
<keyword id="KW-1003">Cell membrane</keyword>
<keyword id="KW-0406">Ion transport</keyword>
<keyword id="KW-0472">Membrane</keyword>
<keyword id="KW-0630">Potassium</keyword>
<keyword id="KW-0633">Potassium transport</keyword>
<keyword id="KW-1185">Reference proteome</keyword>
<keyword id="KW-0812">Transmembrane</keyword>
<keyword id="KW-1133">Transmembrane helix</keyword>
<keyword id="KW-0813">Transport</keyword>
<sequence>MISNFILFALFIVTIALITKPLGSYIFRVFNNERTYLDWLAKPFQRVYLLVLGESSKKEQTAKAYFFSLVSFSVMAFIFVLVILLLQGILPLNPQEIKGMSFPQALNTAVSFITNTNWQSYSGETGVSYFAQMLALAVQNFVSAAVGLCVAIALIRSVARHETATIGNFWNDLGKGVFWILLPISIVIAIVYIFQGVPQNVMAYLHVHTLAGTEQIIPQGPIASQEAIKSLGTNGGGFFNANSAHPYENPTVITNYIQMVSIFAIAAALTYTFGKWVGNTKQGWLIFGVMLVLFIISLVVMTISELHGLDFLHSKDIQDIYGQVGHLSNMEGKESRFGVFYSTLYNTVSTSASDGGVNSVLDSYSPLAGMMAMLNMAIGEVIFGGVGAGFYGFFMFLMLAVFIGSLMIGRAPSFLGKRIEANDMKWTMFALLIFPCCVLVFTGLAAVIPSVHQTLTNSGAHGFSEILYAYISGANNNGSAFAGLSANTNYLNITIALSMLIGRFGVIFAVIMLAGSLVKKKRSLQMSEISSLDTTSFIFAILVFFTILLIGGLTIFPALGLGPILDQLNLNFL</sequence>
<comment type="function">
    <text evidence="1">Part of the high-affinity ATP-driven potassium transport (or Kdp) system, which catalyzes the hydrolysis of ATP coupled with the electrogenic transport of potassium into the cytoplasm. This subunit binds the periplasmic potassium ions and delivers the ions to the membrane domain of KdpB through an intramembrane tunnel.</text>
</comment>
<comment type="subunit">
    <text evidence="1">The system is composed of three essential subunits: KdpA, KdpB and KdpC.</text>
</comment>
<comment type="subcellular location">
    <subcellularLocation>
        <location evidence="1">Cell inner membrane</location>
        <topology evidence="1">Multi-pass membrane protein</topology>
    </subcellularLocation>
</comment>
<comment type="similarity">
    <text evidence="1">Belongs to the KdpA family.</text>
</comment>
<protein>
    <recommendedName>
        <fullName evidence="1">Potassium-transporting ATPase potassium-binding subunit</fullName>
    </recommendedName>
    <alternativeName>
        <fullName evidence="1">ATP phosphohydrolase [potassium-transporting] A chain</fullName>
    </alternativeName>
    <alternativeName>
        <fullName evidence="1">Potassium-binding and translocating subunit A</fullName>
    </alternativeName>
    <alternativeName>
        <fullName evidence="1">Potassium-translocating ATPase A chain</fullName>
    </alternativeName>
</protein>
<gene>
    <name evidence="1" type="primary">kdpA</name>
    <name type="ordered locus">FTL_1883</name>
</gene>
<name>KDPA_FRATH</name>
<feature type="chain" id="PRO_1000119343" description="Potassium-transporting ATPase potassium-binding subunit">
    <location>
        <begin position="1"/>
        <end position="573"/>
    </location>
</feature>
<feature type="transmembrane region" description="Helical" evidence="1">
    <location>
        <begin position="6"/>
        <end position="26"/>
    </location>
</feature>
<feature type="transmembrane region" description="Helical" evidence="1">
    <location>
        <begin position="66"/>
        <end position="86"/>
    </location>
</feature>
<feature type="transmembrane region" description="Helical" evidence="1">
    <location>
        <begin position="135"/>
        <end position="155"/>
    </location>
</feature>
<feature type="transmembrane region" description="Helical" evidence="1">
    <location>
        <begin position="177"/>
        <end position="197"/>
    </location>
</feature>
<feature type="transmembrane region" description="Helical" evidence="1">
    <location>
        <begin position="257"/>
        <end position="277"/>
    </location>
</feature>
<feature type="transmembrane region" description="Helical" evidence="1">
    <location>
        <begin position="283"/>
        <end position="303"/>
    </location>
</feature>
<feature type="transmembrane region" description="Helical" evidence="1">
    <location>
        <begin position="382"/>
        <end position="402"/>
    </location>
</feature>
<feature type="transmembrane region" description="Helical" evidence="1">
    <location>
        <begin position="428"/>
        <end position="448"/>
    </location>
</feature>
<feature type="transmembrane region" description="Helical" evidence="1">
    <location>
        <begin position="493"/>
        <end position="513"/>
    </location>
</feature>
<feature type="transmembrane region" description="Helical" evidence="1">
    <location>
        <begin position="537"/>
        <end position="557"/>
    </location>
</feature>
<organism>
    <name type="scientific">Francisella tularensis subsp. holarctica (strain LVS)</name>
    <dbReference type="NCBI Taxonomy" id="376619"/>
    <lineage>
        <taxon>Bacteria</taxon>
        <taxon>Pseudomonadati</taxon>
        <taxon>Pseudomonadota</taxon>
        <taxon>Gammaproteobacteria</taxon>
        <taxon>Thiotrichales</taxon>
        <taxon>Francisellaceae</taxon>
        <taxon>Francisella</taxon>
    </lineage>
</organism>